<protein>
    <recommendedName>
        <fullName evidence="1">Fluoride-specific ion channel FluC</fullName>
    </recommendedName>
</protein>
<gene>
    <name evidence="1" type="primary">fluC</name>
    <name evidence="1" type="synonym">crcB</name>
    <name type="ordered locus">VC_0060</name>
</gene>
<organism>
    <name type="scientific">Vibrio cholerae serotype O1 (strain ATCC 39315 / El Tor Inaba N16961)</name>
    <dbReference type="NCBI Taxonomy" id="243277"/>
    <lineage>
        <taxon>Bacteria</taxon>
        <taxon>Pseudomonadati</taxon>
        <taxon>Pseudomonadota</taxon>
        <taxon>Gammaproteobacteria</taxon>
        <taxon>Vibrionales</taxon>
        <taxon>Vibrionaceae</taxon>
        <taxon>Vibrio</taxon>
    </lineage>
</organism>
<keyword id="KW-0997">Cell inner membrane</keyword>
<keyword id="KW-1003">Cell membrane</keyword>
<keyword id="KW-0407">Ion channel</keyword>
<keyword id="KW-0406">Ion transport</keyword>
<keyword id="KW-0472">Membrane</keyword>
<keyword id="KW-0479">Metal-binding</keyword>
<keyword id="KW-1185">Reference proteome</keyword>
<keyword id="KW-0915">Sodium</keyword>
<keyword id="KW-0812">Transmembrane</keyword>
<keyword id="KW-1133">Transmembrane helix</keyword>
<keyword id="KW-0813">Transport</keyword>
<proteinExistence type="inferred from homology"/>
<reference key="1">
    <citation type="journal article" date="2000" name="Nature">
        <title>DNA sequence of both chromosomes of the cholera pathogen Vibrio cholerae.</title>
        <authorList>
            <person name="Heidelberg J.F."/>
            <person name="Eisen J.A."/>
            <person name="Nelson W.C."/>
            <person name="Clayton R.A."/>
            <person name="Gwinn M.L."/>
            <person name="Dodson R.J."/>
            <person name="Haft D.H."/>
            <person name="Hickey E.K."/>
            <person name="Peterson J.D."/>
            <person name="Umayam L.A."/>
            <person name="Gill S.R."/>
            <person name="Nelson K.E."/>
            <person name="Read T.D."/>
            <person name="Tettelin H."/>
            <person name="Richardson D.L."/>
            <person name="Ermolaeva M.D."/>
            <person name="Vamathevan J.J."/>
            <person name="Bass S."/>
            <person name="Qin H."/>
            <person name="Dragoi I."/>
            <person name="Sellers P."/>
            <person name="McDonald L.A."/>
            <person name="Utterback T.R."/>
            <person name="Fleischmann R.D."/>
            <person name="Nierman W.C."/>
            <person name="White O."/>
            <person name="Salzberg S.L."/>
            <person name="Smith H.O."/>
            <person name="Colwell R.R."/>
            <person name="Mekalanos J.J."/>
            <person name="Venter J.C."/>
            <person name="Fraser C.M."/>
        </authorList>
    </citation>
    <scope>NUCLEOTIDE SEQUENCE [LARGE SCALE GENOMIC DNA]</scope>
    <source>
        <strain>ATCC 39315 / El Tor Inaba N16961</strain>
    </source>
</reference>
<accession>Q9KVS9</accession>
<evidence type="ECO:0000255" key="1">
    <source>
        <dbReference type="HAMAP-Rule" id="MF_00454"/>
    </source>
</evidence>
<sequence length="126" mass="13531">MSFAILGFIALGGAVGACARFLVSEICVTLFGRGFPIGTLTVNVVGSFIMGVLIACVENEWLSPYPWKQVIGLGFLGALTTFSTFSMDNVLLMQQGAFFKMGANVLLNVILSISAAWIGFHWLMKS</sequence>
<feature type="chain" id="PRO_0000110206" description="Fluoride-specific ion channel FluC">
    <location>
        <begin position="1"/>
        <end position="126"/>
    </location>
</feature>
<feature type="transmembrane region" description="Helical" evidence="1">
    <location>
        <begin position="3"/>
        <end position="23"/>
    </location>
</feature>
<feature type="transmembrane region" description="Helical" evidence="1">
    <location>
        <begin position="37"/>
        <end position="57"/>
    </location>
</feature>
<feature type="transmembrane region" description="Helical" evidence="1">
    <location>
        <begin position="70"/>
        <end position="90"/>
    </location>
</feature>
<feature type="transmembrane region" description="Helical" evidence="1">
    <location>
        <begin position="104"/>
        <end position="124"/>
    </location>
</feature>
<feature type="binding site" evidence="1">
    <location>
        <position position="77"/>
    </location>
    <ligand>
        <name>Na(+)</name>
        <dbReference type="ChEBI" id="CHEBI:29101"/>
        <note>structural</note>
    </ligand>
</feature>
<feature type="binding site" evidence="1">
    <location>
        <position position="80"/>
    </location>
    <ligand>
        <name>Na(+)</name>
        <dbReference type="ChEBI" id="CHEBI:29101"/>
        <note>structural</note>
    </ligand>
</feature>
<dbReference type="EMBL" id="AE003852">
    <property type="protein sequence ID" value="AAF93238.1"/>
    <property type="molecule type" value="Genomic_DNA"/>
</dbReference>
<dbReference type="PIR" id="G82368">
    <property type="entry name" value="G82368"/>
</dbReference>
<dbReference type="RefSeq" id="NP_229719.1">
    <property type="nucleotide sequence ID" value="NC_002505.1"/>
</dbReference>
<dbReference type="RefSeq" id="WP_000006444.1">
    <property type="nucleotide sequence ID" value="NZ_LT906614.1"/>
</dbReference>
<dbReference type="SMR" id="Q9KVS9"/>
<dbReference type="STRING" id="243277.VC_0060"/>
<dbReference type="DNASU" id="2614420"/>
<dbReference type="EnsemblBacteria" id="AAF93238">
    <property type="protein sequence ID" value="AAF93238"/>
    <property type="gene ID" value="VC_0060"/>
</dbReference>
<dbReference type="KEGG" id="vch:VC_0060"/>
<dbReference type="PATRIC" id="fig|243277.26.peg.58"/>
<dbReference type="eggNOG" id="COG0239">
    <property type="taxonomic scope" value="Bacteria"/>
</dbReference>
<dbReference type="HOGENOM" id="CLU_114342_3_0_6"/>
<dbReference type="Proteomes" id="UP000000584">
    <property type="component" value="Chromosome 1"/>
</dbReference>
<dbReference type="GO" id="GO:0005886">
    <property type="term" value="C:plasma membrane"/>
    <property type="evidence" value="ECO:0000318"/>
    <property type="project" value="GO_Central"/>
</dbReference>
<dbReference type="GO" id="GO:0062054">
    <property type="term" value="F:fluoride channel activity"/>
    <property type="evidence" value="ECO:0007669"/>
    <property type="project" value="UniProtKB-UniRule"/>
</dbReference>
<dbReference type="GO" id="GO:1903425">
    <property type="term" value="F:fluoride transmembrane transporter activity"/>
    <property type="evidence" value="ECO:0000318"/>
    <property type="project" value="GO_Central"/>
</dbReference>
<dbReference type="GO" id="GO:0046872">
    <property type="term" value="F:metal ion binding"/>
    <property type="evidence" value="ECO:0007669"/>
    <property type="project" value="UniProtKB-KW"/>
</dbReference>
<dbReference type="GO" id="GO:0140114">
    <property type="term" value="P:cellular detoxification of fluoride"/>
    <property type="evidence" value="ECO:0007669"/>
    <property type="project" value="UniProtKB-UniRule"/>
</dbReference>
<dbReference type="GO" id="GO:1903424">
    <property type="term" value="P:fluoride transmembrane transport"/>
    <property type="evidence" value="ECO:0000318"/>
    <property type="project" value="GO_Central"/>
</dbReference>
<dbReference type="HAMAP" id="MF_00454">
    <property type="entry name" value="FluC"/>
    <property type="match status" value="1"/>
</dbReference>
<dbReference type="InterPro" id="IPR003691">
    <property type="entry name" value="FluC"/>
</dbReference>
<dbReference type="NCBIfam" id="TIGR00494">
    <property type="entry name" value="crcB"/>
    <property type="match status" value="1"/>
</dbReference>
<dbReference type="NCBIfam" id="NF010796">
    <property type="entry name" value="PRK14200.1"/>
    <property type="match status" value="1"/>
</dbReference>
<dbReference type="PANTHER" id="PTHR28259">
    <property type="entry name" value="FLUORIDE EXPORT PROTEIN 1-RELATED"/>
    <property type="match status" value="1"/>
</dbReference>
<dbReference type="PANTHER" id="PTHR28259:SF1">
    <property type="entry name" value="FLUORIDE EXPORT PROTEIN 1-RELATED"/>
    <property type="match status" value="1"/>
</dbReference>
<dbReference type="Pfam" id="PF02537">
    <property type="entry name" value="CRCB"/>
    <property type="match status" value="1"/>
</dbReference>
<name>FLUC_VIBCH</name>
<comment type="function">
    <text evidence="1">Fluoride-specific ion channel. Important for reducing fluoride concentration in the cell, thus reducing its toxicity.</text>
</comment>
<comment type="catalytic activity">
    <reaction evidence="1">
        <text>fluoride(in) = fluoride(out)</text>
        <dbReference type="Rhea" id="RHEA:76159"/>
        <dbReference type="ChEBI" id="CHEBI:17051"/>
    </reaction>
    <physiologicalReaction direction="left-to-right" evidence="1">
        <dbReference type="Rhea" id="RHEA:76160"/>
    </physiologicalReaction>
</comment>
<comment type="activity regulation">
    <text evidence="1">Na(+) is not transported, but it plays an essential structural role and its presence is essential for fluoride channel function.</text>
</comment>
<comment type="subcellular location">
    <subcellularLocation>
        <location evidence="1">Cell inner membrane</location>
        <topology evidence="1">Multi-pass membrane protein</topology>
    </subcellularLocation>
</comment>
<comment type="similarity">
    <text evidence="1">Belongs to the fluoride channel Fluc/FEX (TC 1.A.43) family.</text>
</comment>